<name>COX2_CHOPI</name>
<comment type="function">
    <text evidence="1">Component of the cytochrome c oxidase, the last enzyme in the mitochondrial electron transport chain which drives oxidative phosphorylation. The respiratory chain contains 3 multisubunit complexes succinate dehydrogenase (complex II, CII), ubiquinol-cytochrome c oxidoreductase (cytochrome b-c1 complex, complex III, CIII) and cytochrome c oxidase (complex IV, CIV), that cooperate to transfer electrons derived from NADH and succinate to molecular oxygen, creating an electrochemical gradient over the inner membrane that drives transmembrane transport and the ATP synthase. Cytochrome c oxidase is the component of the respiratory chain that catalyzes the reduction of oxygen to water. Electrons originating from reduced cytochrome c in the intermembrane space (IMS) are transferred via the dinuclear copper A center (CU(A)) of subunit 2 and heme A of subunit 1 to the active site in subunit 1, a binuclear center (BNC) formed by heme A3 and copper B (CU(B)). The BNC reduces molecular oxygen to 2 water molecules using 4 electrons from cytochrome c in the IMS and 4 protons from the mitochondrial matrix.</text>
</comment>
<comment type="catalytic activity">
    <reaction evidence="1">
        <text>4 Fe(II)-[cytochrome c] + O2 + 8 H(+)(in) = 4 Fe(III)-[cytochrome c] + 2 H2O + 4 H(+)(out)</text>
        <dbReference type="Rhea" id="RHEA:11436"/>
        <dbReference type="Rhea" id="RHEA-COMP:10350"/>
        <dbReference type="Rhea" id="RHEA-COMP:14399"/>
        <dbReference type="ChEBI" id="CHEBI:15377"/>
        <dbReference type="ChEBI" id="CHEBI:15378"/>
        <dbReference type="ChEBI" id="CHEBI:15379"/>
        <dbReference type="ChEBI" id="CHEBI:29033"/>
        <dbReference type="ChEBI" id="CHEBI:29034"/>
        <dbReference type="EC" id="7.1.1.9"/>
    </reaction>
    <physiologicalReaction direction="left-to-right" evidence="1">
        <dbReference type="Rhea" id="RHEA:11437"/>
    </physiologicalReaction>
</comment>
<comment type="cofactor">
    <cofactor evidence="1">
        <name>Cu cation</name>
        <dbReference type="ChEBI" id="CHEBI:23378"/>
    </cofactor>
    <text evidence="1">Binds a dinuclear copper A center per subunit.</text>
</comment>
<comment type="subunit">
    <text evidence="1">Component of the cytochrome c oxidase (complex IV, CIV), a multisubunit enzyme composed of a catalytic core of 3 subunits and several supernumerary subunits. The complex exists as a monomer or a dimer and forms supercomplexes (SCs) in the inner mitochondrial membrane with ubiquinol-cytochrome c oxidoreductase (cytochrome b-c1 complex, complex III, CIII).</text>
</comment>
<comment type="subcellular location">
    <subcellularLocation>
        <location evidence="1">Mitochondrion inner membrane</location>
        <topology evidence="1">Multi-pass membrane protein</topology>
    </subcellularLocation>
</comment>
<comment type="similarity">
    <text evidence="3">Belongs to the cytochrome c oxidase subunit 2 family.</text>
</comment>
<protein>
    <recommendedName>
        <fullName>Cytochrome c oxidase subunit 2</fullName>
        <ecNumber>7.1.1.9</ecNumber>
    </recommendedName>
    <alternativeName>
        <fullName>Cytochrome c oxidase polypeptide II</fullName>
    </alternativeName>
</protein>
<gene>
    <name type="primary">COII</name>
</gene>
<sequence length="227" mass="26434">MATWSNFNLQNSASPLMEQIIFFHDHTLVILIMITILVGYLMISLFFNSYINRFLLEGQMIELIWTILPAITLIFIALPSLRLLYLLDELNNPLITLKSIGHQWYWSYEYSDFQNIQFDSYMIPINEMKNNNFRLLDVDNRIVLPMNNQIRILVTATDVIHSWTIPSLGVKVDANPGRLNQTNFFINRPGIFYGQCSEICGANHSFMPIVIESISIKNFINWINNYS</sequence>
<dbReference type="EC" id="7.1.1.9"/>
<dbReference type="EMBL" id="L19095">
    <property type="protein sequence ID" value="AAA53645.1"/>
    <property type="molecule type" value="Genomic_DNA"/>
</dbReference>
<dbReference type="SMR" id="P84290"/>
<dbReference type="GO" id="GO:0005743">
    <property type="term" value="C:mitochondrial inner membrane"/>
    <property type="evidence" value="ECO:0007669"/>
    <property type="project" value="UniProtKB-SubCell"/>
</dbReference>
<dbReference type="GO" id="GO:0005507">
    <property type="term" value="F:copper ion binding"/>
    <property type="evidence" value="ECO:0007669"/>
    <property type="project" value="InterPro"/>
</dbReference>
<dbReference type="GO" id="GO:0004129">
    <property type="term" value="F:cytochrome-c oxidase activity"/>
    <property type="evidence" value="ECO:0007669"/>
    <property type="project" value="UniProtKB-EC"/>
</dbReference>
<dbReference type="GO" id="GO:0042773">
    <property type="term" value="P:ATP synthesis coupled electron transport"/>
    <property type="evidence" value="ECO:0007669"/>
    <property type="project" value="TreeGrafter"/>
</dbReference>
<dbReference type="CDD" id="cd13912">
    <property type="entry name" value="CcO_II_C"/>
    <property type="match status" value="1"/>
</dbReference>
<dbReference type="FunFam" id="1.10.287.90:FF:000006">
    <property type="entry name" value="Cytochrome c oxidase subunit 2"/>
    <property type="match status" value="1"/>
</dbReference>
<dbReference type="FunFam" id="2.60.40.420:FF:000001">
    <property type="entry name" value="Cytochrome c oxidase subunit 2"/>
    <property type="match status" value="1"/>
</dbReference>
<dbReference type="Gene3D" id="1.10.287.90">
    <property type="match status" value="1"/>
</dbReference>
<dbReference type="Gene3D" id="2.60.40.420">
    <property type="entry name" value="Cupredoxins - blue copper proteins"/>
    <property type="match status" value="1"/>
</dbReference>
<dbReference type="InterPro" id="IPR045187">
    <property type="entry name" value="CcO_II"/>
</dbReference>
<dbReference type="InterPro" id="IPR002429">
    <property type="entry name" value="CcO_II-like_C"/>
</dbReference>
<dbReference type="InterPro" id="IPR034210">
    <property type="entry name" value="CcO_II_C"/>
</dbReference>
<dbReference type="InterPro" id="IPR001505">
    <property type="entry name" value="Copper_CuA"/>
</dbReference>
<dbReference type="InterPro" id="IPR008972">
    <property type="entry name" value="Cupredoxin"/>
</dbReference>
<dbReference type="InterPro" id="IPR014222">
    <property type="entry name" value="Cyt_c_oxidase_su2"/>
</dbReference>
<dbReference type="InterPro" id="IPR011759">
    <property type="entry name" value="Cyt_c_oxidase_su2_TM_dom"/>
</dbReference>
<dbReference type="InterPro" id="IPR036257">
    <property type="entry name" value="Cyt_c_oxidase_su2_TM_sf"/>
</dbReference>
<dbReference type="NCBIfam" id="TIGR02866">
    <property type="entry name" value="CoxB"/>
    <property type="match status" value="1"/>
</dbReference>
<dbReference type="PANTHER" id="PTHR22888:SF9">
    <property type="entry name" value="CYTOCHROME C OXIDASE SUBUNIT 2"/>
    <property type="match status" value="1"/>
</dbReference>
<dbReference type="PANTHER" id="PTHR22888">
    <property type="entry name" value="CYTOCHROME C OXIDASE, SUBUNIT II"/>
    <property type="match status" value="1"/>
</dbReference>
<dbReference type="Pfam" id="PF00116">
    <property type="entry name" value="COX2"/>
    <property type="match status" value="1"/>
</dbReference>
<dbReference type="Pfam" id="PF02790">
    <property type="entry name" value="COX2_TM"/>
    <property type="match status" value="1"/>
</dbReference>
<dbReference type="PRINTS" id="PR01166">
    <property type="entry name" value="CYCOXIDASEII"/>
</dbReference>
<dbReference type="SUPFAM" id="SSF49503">
    <property type="entry name" value="Cupredoxins"/>
    <property type="match status" value="1"/>
</dbReference>
<dbReference type="SUPFAM" id="SSF81464">
    <property type="entry name" value="Cytochrome c oxidase subunit II-like, transmembrane region"/>
    <property type="match status" value="1"/>
</dbReference>
<dbReference type="PROSITE" id="PS00078">
    <property type="entry name" value="COX2"/>
    <property type="match status" value="1"/>
</dbReference>
<dbReference type="PROSITE" id="PS50857">
    <property type="entry name" value="COX2_CUA"/>
    <property type="match status" value="1"/>
</dbReference>
<dbReference type="PROSITE" id="PS50999">
    <property type="entry name" value="COX2_TM"/>
    <property type="match status" value="1"/>
</dbReference>
<proteinExistence type="inferred from homology"/>
<reference key="1">
    <citation type="journal article" date="1994" name="Mol. Biol. Evol.">
        <title>Mitochondrial DNA sequence variation in the spruce budworm species complex (Choristoneura: Lepidoptera).</title>
        <authorList>
            <person name="Sperling F.A.H."/>
            <person name="Hickey D.A."/>
        </authorList>
    </citation>
    <scope>NUCLEOTIDE SEQUENCE [GENOMIC DNA]</scope>
    <source>
        <strain>15</strain>
    </source>
</reference>
<geneLocation type="mitochondrion"/>
<evidence type="ECO:0000250" key="1">
    <source>
        <dbReference type="UniProtKB" id="P00410"/>
    </source>
</evidence>
<evidence type="ECO:0000255" key="2"/>
<evidence type="ECO:0000305" key="3"/>
<organism>
    <name type="scientific">Choristoneura pinus</name>
    <name type="common">Jack pine budworm</name>
    <name type="synonym">Archips pinus</name>
    <dbReference type="NCBI Taxonomy" id="27542"/>
    <lineage>
        <taxon>Eukaryota</taxon>
        <taxon>Metazoa</taxon>
        <taxon>Ecdysozoa</taxon>
        <taxon>Arthropoda</taxon>
        <taxon>Hexapoda</taxon>
        <taxon>Insecta</taxon>
        <taxon>Pterygota</taxon>
        <taxon>Neoptera</taxon>
        <taxon>Endopterygota</taxon>
        <taxon>Lepidoptera</taxon>
        <taxon>Glossata</taxon>
        <taxon>Ditrysia</taxon>
        <taxon>Tortricoidea</taxon>
        <taxon>Tortricidae</taxon>
        <taxon>Tortricinae</taxon>
        <taxon>Choristoneura</taxon>
    </lineage>
</organism>
<feature type="chain" id="PRO_0000183552" description="Cytochrome c oxidase subunit 2">
    <location>
        <begin position="1"/>
        <end position="227"/>
    </location>
</feature>
<feature type="topological domain" description="Mitochondrial intermembrane" evidence="2">
    <location>
        <begin position="1"/>
        <end position="26"/>
    </location>
</feature>
<feature type="transmembrane region" description="Helical" evidence="2">
    <location>
        <begin position="27"/>
        <end position="51"/>
    </location>
</feature>
<feature type="topological domain" description="Mitochondrial matrix" evidence="2">
    <location>
        <begin position="52"/>
        <end position="62"/>
    </location>
</feature>
<feature type="transmembrane region" description="Helical" evidence="2">
    <location>
        <begin position="63"/>
        <end position="81"/>
    </location>
</feature>
<feature type="topological domain" description="Mitochondrial intermembrane" evidence="2">
    <location>
        <begin position="82"/>
        <end position="227"/>
    </location>
</feature>
<feature type="binding site" evidence="1">
    <location>
        <position position="161"/>
    </location>
    <ligand>
        <name>Cu cation</name>
        <dbReference type="ChEBI" id="CHEBI:23378"/>
        <label>A1</label>
    </ligand>
</feature>
<feature type="binding site" evidence="1">
    <location>
        <position position="196"/>
    </location>
    <ligand>
        <name>Cu cation</name>
        <dbReference type="ChEBI" id="CHEBI:23378"/>
        <label>A1</label>
    </ligand>
</feature>
<feature type="binding site" evidence="1">
    <location>
        <position position="196"/>
    </location>
    <ligand>
        <name>Cu cation</name>
        <dbReference type="ChEBI" id="CHEBI:23378"/>
        <label>A2</label>
    </ligand>
</feature>
<feature type="binding site" evidence="1">
    <location>
        <position position="198"/>
    </location>
    <ligand>
        <name>Cu cation</name>
        <dbReference type="ChEBI" id="CHEBI:23378"/>
        <label>A2</label>
    </ligand>
</feature>
<feature type="binding site" evidence="1">
    <location>
        <position position="198"/>
    </location>
    <ligand>
        <name>Mg(2+)</name>
        <dbReference type="ChEBI" id="CHEBI:18420"/>
        <note>ligand shared with subunit 1</note>
    </ligand>
</feature>
<feature type="binding site" evidence="1">
    <location>
        <position position="200"/>
    </location>
    <ligand>
        <name>Cu cation</name>
        <dbReference type="ChEBI" id="CHEBI:23378"/>
        <label>A1</label>
    </ligand>
</feature>
<feature type="binding site" evidence="1">
    <location>
        <position position="200"/>
    </location>
    <ligand>
        <name>Cu cation</name>
        <dbReference type="ChEBI" id="CHEBI:23378"/>
        <label>A2</label>
    </ligand>
</feature>
<feature type="binding site" evidence="1">
    <location>
        <position position="204"/>
    </location>
    <ligand>
        <name>Cu cation</name>
        <dbReference type="ChEBI" id="CHEBI:23378"/>
        <label>A2</label>
    </ligand>
</feature>
<feature type="binding site" evidence="1">
    <location>
        <position position="207"/>
    </location>
    <ligand>
        <name>Cu cation</name>
        <dbReference type="ChEBI" id="CHEBI:23378"/>
        <label>A1</label>
    </ligand>
</feature>
<keyword id="KW-0186">Copper</keyword>
<keyword id="KW-0249">Electron transport</keyword>
<keyword id="KW-0460">Magnesium</keyword>
<keyword id="KW-0472">Membrane</keyword>
<keyword id="KW-0479">Metal-binding</keyword>
<keyword id="KW-0496">Mitochondrion</keyword>
<keyword id="KW-0999">Mitochondrion inner membrane</keyword>
<keyword id="KW-0679">Respiratory chain</keyword>
<keyword id="KW-1278">Translocase</keyword>
<keyword id="KW-0812">Transmembrane</keyword>
<keyword id="KW-1133">Transmembrane helix</keyword>
<keyword id="KW-0813">Transport</keyword>
<accession>P84290</accession>
<accession>P98026</accession>